<comment type="function">
    <text>T-cell activation.</text>
</comment>
<comment type="interaction">
    <interactant intactId="EBI-11600492">
        <id>P05533</id>
    </interactant>
    <interactant intactId="EBI-2899393">
        <id>Q64729</id>
        <label>Tgfbr1</label>
    </interactant>
    <organismsDiffer>false</organismsDiffer>
    <experiments>2</experiments>
</comment>
<comment type="subcellular location">
    <subcellularLocation>
        <location>Cell membrane</location>
        <topology>Lipid-anchor</topology>
        <topology>GPI-anchor</topology>
    </subcellularLocation>
</comment>
<comment type="tissue specificity">
    <text evidence="3 4">Widely expressed.</text>
</comment>
<comment type="PTM">
    <text evidence="5">O-glycosylated. Not N-glycosylated.</text>
</comment>
<comment type="PTM">
    <text>Not phosphorylated.</text>
</comment>
<sequence length="134" mass="14377">MDTSHTTKSCLLILLVALLCAERAQGLECYQCYGVPFETSCPSITCPYPDGVCVTQEAAVIVDSQTRKVKNNLCLPICPPNIESMEILGTKVNVKTSCCQEDLCNVAVPNGGSTWTMAGVLLFSLSSVLLQTLL</sequence>
<dbReference type="EMBL" id="M18184">
    <property type="protein sequence ID" value="AAA39463.1"/>
    <property type="molecule type" value="mRNA"/>
</dbReference>
<dbReference type="EMBL" id="J03636">
    <property type="protein sequence ID" value="AAA40163.1"/>
    <property type="molecule type" value="mRNA"/>
</dbReference>
<dbReference type="EMBL" id="X04653">
    <property type="protein sequence ID" value="CAA28351.1"/>
    <property type="molecule type" value="mRNA"/>
</dbReference>
<dbReference type="EMBL" id="M37707">
    <property type="protein sequence ID" value="AAA39467.1"/>
    <property type="molecule type" value="Genomic_DNA"/>
</dbReference>
<dbReference type="EMBL" id="M74013">
    <property type="protein sequence ID" value="AAA39464.1"/>
    <property type="molecule type" value="Genomic_DNA"/>
</dbReference>
<dbReference type="EMBL" id="M73552">
    <property type="protein sequence ID" value="AAA39465.1"/>
    <property type="molecule type" value="Genomic_DNA"/>
</dbReference>
<dbReference type="EMBL" id="M59713">
    <property type="protein sequence ID" value="AAA40164.1"/>
    <property type="molecule type" value="Genomic_DNA"/>
</dbReference>
<dbReference type="EMBL" id="AK076200">
    <property type="protein sequence ID" value="BAC36250.1"/>
    <property type="molecule type" value="mRNA"/>
</dbReference>
<dbReference type="EMBL" id="BC002070">
    <property type="protein sequence ID" value="AAH02070.1"/>
    <property type="molecule type" value="mRNA"/>
</dbReference>
<dbReference type="CCDS" id="CCDS27540.1"/>
<dbReference type="PIR" id="A25708">
    <property type="entry name" value="A25708"/>
</dbReference>
<dbReference type="PIR" id="A35921">
    <property type="entry name" value="A32506"/>
</dbReference>
<dbReference type="RefSeq" id="NP_001258345.1">
    <property type="nucleotide sequence ID" value="NM_001271416.1"/>
</dbReference>
<dbReference type="RefSeq" id="NP_001258346.1">
    <property type="nucleotide sequence ID" value="NM_001271417.1"/>
</dbReference>
<dbReference type="RefSeq" id="NP_001258347.1">
    <property type="nucleotide sequence ID" value="NM_001271418.1"/>
</dbReference>
<dbReference type="RefSeq" id="NP_001258348.1">
    <property type="nucleotide sequence ID" value="NM_001271419.1"/>
</dbReference>
<dbReference type="RefSeq" id="NP_001258375.1">
    <property type="nucleotide sequence ID" value="NM_001271446.1"/>
</dbReference>
<dbReference type="RefSeq" id="NP_034868.1">
    <property type="nucleotide sequence ID" value="NM_010738.3"/>
</dbReference>
<dbReference type="SMR" id="P05533"/>
<dbReference type="BioGRID" id="225606">
    <property type="interactions" value="1"/>
</dbReference>
<dbReference type="DIP" id="DIP-59628N"/>
<dbReference type="FunCoup" id="P05533">
    <property type="interactions" value="13"/>
</dbReference>
<dbReference type="IntAct" id="P05533">
    <property type="interactions" value="2"/>
</dbReference>
<dbReference type="STRING" id="10090.ENSMUSP00000140287"/>
<dbReference type="SwissPalm" id="P05533"/>
<dbReference type="jPOST" id="P05533"/>
<dbReference type="PaxDb" id="10090-ENSMUSP00000140287"/>
<dbReference type="PeptideAtlas" id="P05533"/>
<dbReference type="ProteomicsDB" id="290196"/>
<dbReference type="Pumba" id="P05533"/>
<dbReference type="DNASU" id="110454"/>
<dbReference type="Ensembl" id="ENSMUST00000023248.13">
    <property type="protein sequence ID" value="ENSMUSP00000023248.7"/>
    <property type="gene ID" value="ENSMUSG00000075602.11"/>
</dbReference>
<dbReference type="Ensembl" id="ENSMUST00000186526.7">
    <property type="protein sequence ID" value="ENSMUSP00000140998.2"/>
    <property type="gene ID" value="ENSMUSG00000075602.11"/>
</dbReference>
<dbReference type="Ensembl" id="ENSMUST00000187171.2">
    <property type="protein sequence ID" value="ENSMUSP00000140099.2"/>
    <property type="gene ID" value="ENSMUSG00000075602.11"/>
</dbReference>
<dbReference type="Ensembl" id="ENSMUST00000187994.7">
    <property type="protein sequence ID" value="ENSMUSP00000140287.2"/>
    <property type="gene ID" value="ENSMUSG00000075602.11"/>
</dbReference>
<dbReference type="Ensembl" id="ENSMUST00000189068.7">
    <property type="protein sequence ID" value="ENSMUSP00000140638.2"/>
    <property type="gene ID" value="ENSMUSG00000075602.11"/>
</dbReference>
<dbReference type="GeneID" id="110454"/>
<dbReference type="KEGG" id="mmu:110454"/>
<dbReference type="UCSC" id="uc007wgk.2">
    <property type="organism name" value="mouse"/>
</dbReference>
<dbReference type="AGR" id="MGI:107527"/>
<dbReference type="CTD" id="110454"/>
<dbReference type="MGI" id="MGI:107527">
    <property type="gene designation" value="Ly6a"/>
</dbReference>
<dbReference type="VEuPathDB" id="HostDB:ENSMUSG00000075602"/>
<dbReference type="eggNOG" id="ENOG502TD4F">
    <property type="taxonomic scope" value="Eukaryota"/>
</dbReference>
<dbReference type="GeneTree" id="ENSGT00940000154560"/>
<dbReference type="HOGENOM" id="CLU_106772_0_0_1"/>
<dbReference type="InParanoid" id="P05533"/>
<dbReference type="OMA" id="QEVTCCE"/>
<dbReference type="OrthoDB" id="9624109at2759"/>
<dbReference type="PhylomeDB" id="P05533"/>
<dbReference type="TreeFam" id="TF337757"/>
<dbReference type="BioGRID-ORCS" id="110454">
    <property type="hits" value="2 hits in 56 CRISPR screens"/>
</dbReference>
<dbReference type="ChiTaRS" id="Ly6a">
    <property type="organism name" value="mouse"/>
</dbReference>
<dbReference type="PRO" id="PR:P05533"/>
<dbReference type="Proteomes" id="UP000000589">
    <property type="component" value="Chromosome 15"/>
</dbReference>
<dbReference type="RNAct" id="P05533">
    <property type="molecule type" value="protein"/>
</dbReference>
<dbReference type="Bgee" id="ENSMUSG00000075602">
    <property type="expression patterns" value="Expressed in gastrula and 242 other cell types or tissues"/>
</dbReference>
<dbReference type="ExpressionAtlas" id="P05533">
    <property type="expression patterns" value="baseline and differential"/>
</dbReference>
<dbReference type="GO" id="GO:0009897">
    <property type="term" value="C:external side of plasma membrane"/>
    <property type="evidence" value="ECO:0000314"/>
    <property type="project" value="MGI"/>
</dbReference>
<dbReference type="GO" id="GO:0009617">
    <property type="term" value="P:response to bacterium"/>
    <property type="evidence" value="ECO:0000270"/>
    <property type="project" value="MGI"/>
</dbReference>
<dbReference type="CDD" id="cd23541">
    <property type="entry name" value="TFP_LU_ECD_Ly6A_like"/>
    <property type="match status" value="1"/>
</dbReference>
<dbReference type="FunFam" id="2.10.60.10:FF:000003">
    <property type="entry name" value="lymphocyte antigen 6E isoform X1"/>
    <property type="match status" value="1"/>
</dbReference>
<dbReference type="Gene3D" id="2.10.60.10">
    <property type="entry name" value="CD59"/>
    <property type="match status" value="1"/>
</dbReference>
<dbReference type="InterPro" id="IPR018363">
    <property type="entry name" value="CD59_antigen_CS"/>
</dbReference>
<dbReference type="InterPro" id="IPR016054">
    <property type="entry name" value="LY6_UPA_recep-like"/>
</dbReference>
<dbReference type="InterPro" id="IPR051445">
    <property type="entry name" value="LY6H/LY6L_nAChR_modulators"/>
</dbReference>
<dbReference type="InterPro" id="IPR045860">
    <property type="entry name" value="Snake_toxin-like_sf"/>
</dbReference>
<dbReference type="PANTHER" id="PTHR32217">
    <property type="entry name" value="LYMPHOCYTE ANTIGEN 6H"/>
    <property type="match status" value="1"/>
</dbReference>
<dbReference type="PANTHER" id="PTHR32217:SF3">
    <property type="entry name" value="LYMPHOCYTE ANTIGEN 6S"/>
    <property type="match status" value="1"/>
</dbReference>
<dbReference type="Pfam" id="PF00021">
    <property type="entry name" value="UPAR_LY6"/>
    <property type="match status" value="1"/>
</dbReference>
<dbReference type="SMART" id="SM00134">
    <property type="entry name" value="LU"/>
    <property type="match status" value="1"/>
</dbReference>
<dbReference type="SUPFAM" id="SSF57302">
    <property type="entry name" value="Snake toxin-like"/>
    <property type="match status" value="1"/>
</dbReference>
<dbReference type="PROSITE" id="PS00983">
    <property type="entry name" value="LY6_UPAR"/>
    <property type="match status" value="1"/>
</dbReference>
<accession>P05533</accession>
<accession>Q8BPD0</accession>
<keyword id="KW-1003">Cell membrane</keyword>
<keyword id="KW-0903">Direct protein sequencing</keyword>
<keyword id="KW-1015">Disulfide bond</keyword>
<keyword id="KW-0325">Glycoprotein</keyword>
<keyword id="KW-0336">GPI-anchor</keyword>
<keyword id="KW-0449">Lipoprotein</keyword>
<keyword id="KW-0472">Membrane</keyword>
<keyword id="KW-1185">Reference proteome</keyword>
<keyword id="KW-0732">Signal</keyword>
<reference key="1">
    <citation type="journal article" date="1987" name="Immunogenetics">
        <title>cDNA characterization of an Ly-6.2 gene expressed in BW5147 tumor cells.</title>
        <authorList>
            <person name="Palfree R.G.E."/>
            <person name="Leclair K.P."/>
            <person name="Bothwell A.L.M."/>
            <person name="Haemmerling U."/>
        </authorList>
    </citation>
    <scope>NUCLEOTIDE SEQUENCE [MRNA]</scope>
</reference>
<reference key="2">
    <citation type="journal article" date="1988" name="Proc. Natl. Acad. Sci. U.S.A.">
        <title>Cloning and expression of a cDNA for the T-cell-activating protein TAP.</title>
        <authorList>
            <person name="Reiser H."/>
            <person name="Coligan J."/>
            <person name="Benacerraf B."/>
            <person name="Rock K.L."/>
        </authorList>
    </citation>
    <scope>NUCLEOTIDE SEQUENCE [MRNA]</scope>
</reference>
<reference key="3">
    <citation type="journal article" date="1986" name="EMBO J.">
        <title>Isolation of a murine Ly-6 cDNA reveals a new multigene family.</title>
        <authorList>
            <person name="Leclair K.P."/>
            <person name="Palfree R.G.E."/>
            <person name="Flood P.M."/>
            <person name="Hammerling U."/>
            <person name="Bothwell A.L.M."/>
        </authorList>
    </citation>
    <scope>NUCLEOTIDE SEQUENCE [MRNA] (LY-6E.1)</scope>
</reference>
<reference key="4">
    <citation type="journal article" date="1990" name="Mol. Cell. Biol.">
        <title>Characterization of promoter elements of an interferon-inducible Ly-6E/A differentiation antigen, which is expressed on activated T cells and hematopoietic stem cells.</title>
        <authorList>
            <person name="Khan K."/>
            <person name="Dad Lindwall G."/>
            <person name="Maher S.E."/>
            <person name="Bothwell A.L.M."/>
        </authorList>
    </citation>
    <scope>NUCLEOTIDE SEQUENCE [GENOMIC DNA]</scope>
    <source>
        <strain>BALB/cJ</strain>
    </source>
</reference>
<reference key="5">
    <citation type="journal article" date="1992" name="Immunogenetics">
        <title>The isolation and sequence of the chromosomal gene and regulatory regions of Ly-6A.2.</title>
        <authorList>
            <person name="Stanford W.L."/>
            <person name="Bruyns E."/>
            <person name="Snodgrass H.R."/>
        </authorList>
    </citation>
    <scope>NUCLEOTIDE SEQUENCE [GENOMIC DNA]</scope>
</reference>
<reference key="6">
    <citation type="journal article" date="1991" name="J. Immunol.">
        <title>Isolation, expression, and sequence of the TAP/Ly-6A.2 chromosomal gene.</title>
        <authorList>
            <person name="McGrew J.T."/>
            <person name="Rock K.L."/>
        </authorList>
    </citation>
    <scope>NUCLEOTIDE SEQUENCE [GENOMIC DNA]</scope>
</reference>
<reference key="7">
    <citation type="journal article" date="2005" name="Science">
        <title>The transcriptional landscape of the mammalian genome.</title>
        <authorList>
            <person name="Carninci P."/>
            <person name="Kasukawa T."/>
            <person name="Katayama S."/>
            <person name="Gough J."/>
            <person name="Frith M.C."/>
            <person name="Maeda N."/>
            <person name="Oyama R."/>
            <person name="Ravasi T."/>
            <person name="Lenhard B."/>
            <person name="Wells C."/>
            <person name="Kodzius R."/>
            <person name="Shimokawa K."/>
            <person name="Bajic V.B."/>
            <person name="Brenner S.E."/>
            <person name="Batalov S."/>
            <person name="Forrest A.R."/>
            <person name="Zavolan M."/>
            <person name="Davis M.J."/>
            <person name="Wilming L.G."/>
            <person name="Aidinis V."/>
            <person name="Allen J.E."/>
            <person name="Ambesi-Impiombato A."/>
            <person name="Apweiler R."/>
            <person name="Aturaliya R.N."/>
            <person name="Bailey T.L."/>
            <person name="Bansal M."/>
            <person name="Baxter L."/>
            <person name="Beisel K.W."/>
            <person name="Bersano T."/>
            <person name="Bono H."/>
            <person name="Chalk A.M."/>
            <person name="Chiu K.P."/>
            <person name="Choudhary V."/>
            <person name="Christoffels A."/>
            <person name="Clutterbuck D.R."/>
            <person name="Crowe M.L."/>
            <person name="Dalla E."/>
            <person name="Dalrymple B.P."/>
            <person name="de Bono B."/>
            <person name="Della Gatta G."/>
            <person name="di Bernardo D."/>
            <person name="Down T."/>
            <person name="Engstrom P."/>
            <person name="Fagiolini M."/>
            <person name="Faulkner G."/>
            <person name="Fletcher C.F."/>
            <person name="Fukushima T."/>
            <person name="Furuno M."/>
            <person name="Futaki S."/>
            <person name="Gariboldi M."/>
            <person name="Georgii-Hemming P."/>
            <person name="Gingeras T.R."/>
            <person name="Gojobori T."/>
            <person name="Green R.E."/>
            <person name="Gustincich S."/>
            <person name="Harbers M."/>
            <person name="Hayashi Y."/>
            <person name="Hensch T.K."/>
            <person name="Hirokawa N."/>
            <person name="Hill D."/>
            <person name="Huminiecki L."/>
            <person name="Iacono M."/>
            <person name="Ikeo K."/>
            <person name="Iwama A."/>
            <person name="Ishikawa T."/>
            <person name="Jakt M."/>
            <person name="Kanapin A."/>
            <person name="Katoh M."/>
            <person name="Kawasawa Y."/>
            <person name="Kelso J."/>
            <person name="Kitamura H."/>
            <person name="Kitano H."/>
            <person name="Kollias G."/>
            <person name="Krishnan S.P."/>
            <person name="Kruger A."/>
            <person name="Kummerfeld S.K."/>
            <person name="Kurochkin I.V."/>
            <person name="Lareau L.F."/>
            <person name="Lazarevic D."/>
            <person name="Lipovich L."/>
            <person name="Liu J."/>
            <person name="Liuni S."/>
            <person name="McWilliam S."/>
            <person name="Madan Babu M."/>
            <person name="Madera M."/>
            <person name="Marchionni L."/>
            <person name="Matsuda H."/>
            <person name="Matsuzawa S."/>
            <person name="Miki H."/>
            <person name="Mignone F."/>
            <person name="Miyake S."/>
            <person name="Morris K."/>
            <person name="Mottagui-Tabar S."/>
            <person name="Mulder N."/>
            <person name="Nakano N."/>
            <person name="Nakauchi H."/>
            <person name="Ng P."/>
            <person name="Nilsson R."/>
            <person name="Nishiguchi S."/>
            <person name="Nishikawa S."/>
            <person name="Nori F."/>
            <person name="Ohara O."/>
            <person name="Okazaki Y."/>
            <person name="Orlando V."/>
            <person name="Pang K.C."/>
            <person name="Pavan W.J."/>
            <person name="Pavesi G."/>
            <person name="Pesole G."/>
            <person name="Petrovsky N."/>
            <person name="Piazza S."/>
            <person name="Reed J."/>
            <person name="Reid J.F."/>
            <person name="Ring B.Z."/>
            <person name="Ringwald M."/>
            <person name="Rost B."/>
            <person name="Ruan Y."/>
            <person name="Salzberg S.L."/>
            <person name="Sandelin A."/>
            <person name="Schneider C."/>
            <person name="Schoenbach C."/>
            <person name="Sekiguchi K."/>
            <person name="Semple C.A."/>
            <person name="Seno S."/>
            <person name="Sessa L."/>
            <person name="Sheng Y."/>
            <person name="Shibata Y."/>
            <person name="Shimada H."/>
            <person name="Shimada K."/>
            <person name="Silva D."/>
            <person name="Sinclair B."/>
            <person name="Sperling S."/>
            <person name="Stupka E."/>
            <person name="Sugiura K."/>
            <person name="Sultana R."/>
            <person name="Takenaka Y."/>
            <person name="Taki K."/>
            <person name="Tammoja K."/>
            <person name="Tan S.L."/>
            <person name="Tang S."/>
            <person name="Taylor M.S."/>
            <person name="Tegner J."/>
            <person name="Teichmann S.A."/>
            <person name="Ueda H.R."/>
            <person name="van Nimwegen E."/>
            <person name="Verardo R."/>
            <person name="Wei C.L."/>
            <person name="Yagi K."/>
            <person name="Yamanishi H."/>
            <person name="Zabarovsky E."/>
            <person name="Zhu S."/>
            <person name="Zimmer A."/>
            <person name="Hide W."/>
            <person name="Bult C."/>
            <person name="Grimmond S.M."/>
            <person name="Teasdale R.D."/>
            <person name="Liu E.T."/>
            <person name="Brusic V."/>
            <person name="Quackenbush J."/>
            <person name="Wahlestedt C."/>
            <person name="Mattick J.S."/>
            <person name="Hume D.A."/>
            <person name="Kai C."/>
            <person name="Sasaki D."/>
            <person name="Tomaru Y."/>
            <person name="Fukuda S."/>
            <person name="Kanamori-Katayama M."/>
            <person name="Suzuki M."/>
            <person name="Aoki J."/>
            <person name="Arakawa T."/>
            <person name="Iida J."/>
            <person name="Imamura K."/>
            <person name="Itoh M."/>
            <person name="Kato T."/>
            <person name="Kawaji H."/>
            <person name="Kawagashira N."/>
            <person name="Kawashima T."/>
            <person name="Kojima M."/>
            <person name="Kondo S."/>
            <person name="Konno H."/>
            <person name="Nakano K."/>
            <person name="Ninomiya N."/>
            <person name="Nishio T."/>
            <person name="Okada M."/>
            <person name="Plessy C."/>
            <person name="Shibata K."/>
            <person name="Shiraki T."/>
            <person name="Suzuki S."/>
            <person name="Tagami M."/>
            <person name="Waki K."/>
            <person name="Watahiki A."/>
            <person name="Okamura-Oho Y."/>
            <person name="Suzuki H."/>
            <person name="Kawai J."/>
            <person name="Hayashizaki Y."/>
        </authorList>
    </citation>
    <scope>NUCLEOTIDE SEQUENCE [LARGE SCALE MRNA]</scope>
    <source>
        <strain>C57BL/6J</strain>
        <tissue>Extraembryonic tissue</tissue>
        <tissue>Placenta</tissue>
    </source>
</reference>
<reference key="8">
    <citation type="journal article" date="2004" name="Genome Res.">
        <title>The status, quality, and expansion of the NIH full-length cDNA project: the Mammalian Gene Collection (MGC).</title>
        <authorList>
            <consortium name="The MGC Project Team"/>
        </authorList>
    </citation>
    <scope>NUCLEOTIDE SEQUENCE [LARGE SCALE MRNA]</scope>
    <source>
        <strain>C57BL/6J</strain>
        <tissue>Mammary gland</tissue>
    </source>
</reference>
<reference key="9">
    <citation type="journal article" date="1987" name="Proc. Natl. Acad. Sci. U.S.A.">
        <title>Biosynthesis, glycosylation, and partial N-terminal amino acid sequence of the T-cell-activating protein TAP.</title>
        <authorList>
            <person name="Reiser H."/>
            <person name="Coligan J."/>
            <person name="Benacerraf B."/>
            <person name="Rock K.L."/>
        </authorList>
    </citation>
    <scope>PROTEIN SEQUENCE OF 27-49</scope>
    <scope>GLYCOSYLATION</scope>
</reference>
<reference key="10">
    <citation type="journal article" date="1989" name="Proc. Natl. Acad. Sci. U.S.A.">
        <title>Mouse hematopoietic stem-cell antigen Sca-1 is a member of the Ly-6 antigen family.</title>
        <authorList>
            <person name="van de Rijn M."/>
            <person name="Heimfeld S."/>
            <person name="Spangrude G.J."/>
            <person name="Weissman I.L."/>
        </authorList>
    </citation>
    <scope>TISSUE SPECIFICITY</scope>
</reference>
<reference key="11">
    <citation type="journal article" date="2005" name="Biol. Reprod.">
        <title>LY6A/E (SCA-1) expression in the mouse testis.</title>
        <authorList>
            <person name="van Bragt M.P."/>
            <person name="Ciliberti N."/>
            <person name="Stanford W.L."/>
            <person name="de Rooij D.G."/>
            <person name="van Pelt A.M."/>
        </authorList>
    </citation>
    <scope>TISSUE SPECIFICITY</scope>
</reference>
<reference key="12">
    <citation type="journal article" date="2010" name="Cell">
        <title>A tissue-specific atlas of mouse protein phosphorylation and expression.</title>
        <authorList>
            <person name="Huttlin E.L."/>
            <person name="Jedrychowski M.P."/>
            <person name="Elias J.E."/>
            <person name="Goswami T."/>
            <person name="Rad R."/>
            <person name="Beausoleil S.A."/>
            <person name="Villen J."/>
            <person name="Haas W."/>
            <person name="Sowa M.E."/>
            <person name="Gygi S.P."/>
        </authorList>
    </citation>
    <scope>IDENTIFICATION BY MASS SPECTROMETRY [LARGE SCALE ANALYSIS]</scope>
    <source>
        <tissue>Brown adipose tissue</tissue>
        <tissue>Heart</tissue>
        <tissue>Kidney</tissue>
        <tissue>Lung</tissue>
        <tissue>Spleen</tissue>
    </source>
</reference>
<proteinExistence type="evidence at protein level"/>
<name>LY6A_MOUSE</name>
<organism>
    <name type="scientific">Mus musculus</name>
    <name type="common">Mouse</name>
    <dbReference type="NCBI Taxonomy" id="10090"/>
    <lineage>
        <taxon>Eukaryota</taxon>
        <taxon>Metazoa</taxon>
        <taxon>Chordata</taxon>
        <taxon>Craniata</taxon>
        <taxon>Vertebrata</taxon>
        <taxon>Euteleostomi</taxon>
        <taxon>Mammalia</taxon>
        <taxon>Eutheria</taxon>
        <taxon>Euarchontoglires</taxon>
        <taxon>Glires</taxon>
        <taxon>Rodentia</taxon>
        <taxon>Myomorpha</taxon>
        <taxon>Muroidea</taxon>
        <taxon>Muridae</taxon>
        <taxon>Murinae</taxon>
        <taxon>Mus</taxon>
        <taxon>Mus</taxon>
    </lineage>
</organism>
<evidence type="ECO:0000250" key="1"/>
<evidence type="ECO:0000255" key="2"/>
<evidence type="ECO:0000269" key="3">
    <source>
    </source>
</evidence>
<evidence type="ECO:0000269" key="4">
    <source>
    </source>
</evidence>
<evidence type="ECO:0000269" key="5">
    <source>
    </source>
</evidence>
<evidence type="ECO:0000305" key="6"/>
<gene>
    <name type="primary">Ly6a</name>
    <name type="synonym">Ly6</name>
</gene>
<protein>
    <recommendedName>
        <fullName>Lymphocyte antigen 6A-2/6E-1</fullName>
        <shortName>Ly-6A.2/Ly-6E.1</shortName>
    </recommendedName>
    <alternativeName>
        <fullName>Stem cell antigen 1</fullName>
        <shortName>SCA-1</shortName>
    </alternativeName>
    <alternativeName>
        <fullName>T-cell-activating protein</fullName>
        <shortName>TAP</shortName>
    </alternativeName>
</protein>
<feature type="signal peptide" evidence="5">
    <location>
        <begin position="1"/>
        <end position="26"/>
    </location>
</feature>
<feature type="chain" id="PRO_0000036130" description="Lymphocyte antigen 6A-2/6E-1">
    <location>
        <begin position="27"/>
        <end position="112"/>
    </location>
</feature>
<feature type="propeptide" id="PRO_0000036131" description="Removed in mature form" evidence="2">
    <location>
        <begin position="113"/>
        <end position="134"/>
    </location>
</feature>
<feature type="domain" description="UPAR/Ly6">
    <location>
        <begin position="27"/>
        <end position="119"/>
    </location>
</feature>
<feature type="lipid moiety-binding region" description="GPI-anchor amidated glycine" evidence="2">
    <location>
        <position position="112"/>
    </location>
</feature>
<feature type="disulfide bond" evidence="1">
    <location>
        <begin position="29"/>
        <end position="53"/>
    </location>
</feature>
<feature type="disulfide bond" evidence="1">
    <location>
        <begin position="32"/>
        <end position="41"/>
    </location>
</feature>
<feature type="disulfide bond" evidence="1">
    <location>
        <begin position="46"/>
        <end position="74"/>
    </location>
</feature>
<feature type="disulfide bond" evidence="1">
    <location>
        <begin position="78"/>
        <end position="98"/>
    </location>
</feature>
<feature type="disulfide bond" evidence="1">
    <location>
        <begin position="99"/>
        <end position="104"/>
    </location>
</feature>
<feature type="sequence variant" description="In Ly-6E.1.">
    <original>D</original>
    <variation>G</variation>
    <location>
        <position position="63"/>
    </location>
</feature>
<feature type="sequence variant" description="In Ly-6E.1.">
    <original>V</original>
    <variation>A</variation>
    <location>
        <position position="106"/>
    </location>
</feature>
<feature type="sequence conflict" description="In Ref. 7; BAC36250." evidence="6" ref="7">
    <original>C</original>
    <variation>S</variation>
    <location>
        <position position="32"/>
    </location>
</feature>
<feature type="sequence conflict" description="In Ref. 7; BAC36250." evidence="6" ref="7">
    <original>Q</original>
    <variation>H</variation>
    <location>
        <position position="56"/>
    </location>
</feature>
<feature type="sequence conflict" description="In Ref. 7; BAC36250." evidence="6" ref="7">
    <original>A</original>
    <variation>T</variation>
    <location>
        <position position="59"/>
    </location>
</feature>
<feature type="sequence conflict" description="In Ref. 7; BAC36250." evidence="6" ref="7">
    <original>E</original>
    <variation>Q</variation>
    <location>
        <position position="101"/>
    </location>
</feature>